<feature type="chain" id="PRO_1000142557" description="Large ribosomal subunit protein bL25">
    <location>
        <begin position="1"/>
        <end position="201"/>
    </location>
</feature>
<feature type="region of interest" description="Disordered" evidence="2">
    <location>
        <begin position="181"/>
        <end position="201"/>
    </location>
</feature>
<feature type="compositionally biased region" description="Acidic residues" evidence="2">
    <location>
        <begin position="185"/>
        <end position="194"/>
    </location>
</feature>
<reference key="1">
    <citation type="submission" date="2008-01" db="EMBL/GenBank/DDBJ databases">
        <title>Complete sequence of Thermoanaerobacter sp. X514.</title>
        <authorList>
            <consortium name="US DOE Joint Genome Institute"/>
            <person name="Copeland A."/>
            <person name="Lucas S."/>
            <person name="Lapidus A."/>
            <person name="Barry K."/>
            <person name="Glavina del Rio T."/>
            <person name="Dalin E."/>
            <person name="Tice H."/>
            <person name="Pitluck S."/>
            <person name="Bruce D."/>
            <person name="Goodwin L."/>
            <person name="Saunders E."/>
            <person name="Brettin T."/>
            <person name="Detter J.C."/>
            <person name="Han C."/>
            <person name="Schmutz J."/>
            <person name="Larimer F."/>
            <person name="Land M."/>
            <person name="Hauser L."/>
            <person name="Kyrpides N."/>
            <person name="Kim E."/>
            <person name="Hemme C."/>
            <person name="Fields M.W."/>
            <person name="He Z."/>
            <person name="Zhou J."/>
            <person name="Richardson P."/>
        </authorList>
    </citation>
    <scope>NUCLEOTIDE SEQUENCE [LARGE SCALE GENOMIC DNA]</scope>
    <source>
        <strain>X514</strain>
    </source>
</reference>
<comment type="function">
    <text evidence="1">This is one of the proteins that binds to the 5S RNA in the ribosome where it forms part of the central protuberance.</text>
</comment>
<comment type="subunit">
    <text evidence="1">Part of the 50S ribosomal subunit; part of the 5S rRNA/L5/L18/L25 subcomplex. Contacts the 5S rRNA. Binds to the 5S rRNA independently of L5 and L18.</text>
</comment>
<comment type="similarity">
    <text evidence="1">Belongs to the bacterial ribosomal protein bL25 family. CTC subfamily.</text>
</comment>
<dbReference type="EMBL" id="CP000923">
    <property type="protein sequence ID" value="ABY92340.1"/>
    <property type="molecule type" value="Genomic_DNA"/>
</dbReference>
<dbReference type="RefSeq" id="WP_003866585.1">
    <property type="nucleotide sequence ID" value="NC_010320.1"/>
</dbReference>
<dbReference type="SMR" id="B0K664"/>
<dbReference type="KEGG" id="tex:Teth514_1041"/>
<dbReference type="HOGENOM" id="CLU_075939_2_1_9"/>
<dbReference type="Proteomes" id="UP000002155">
    <property type="component" value="Chromosome"/>
</dbReference>
<dbReference type="GO" id="GO:0022625">
    <property type="term" value="C:cytosolic large ribosomal subunit"/>
    <property type="evidence" value="ECO:0007669"/>
    <property type="project" value="TreeGrafter"/>
</dbReference>
<dbReference type="GO" id="GO:0008097">
    <property type="term" value="F:5S rRNA binding"/>
    <property type="evidence" value="ECO:0007669"/>
    <property type="project" value="InterPro"/>
</dbReference>
<dbReference type="GO" id="GO:0003735">
    <property type="term" value="F:structural constituent of ribosome"/>
    <property type="evidence" value="ECO:0007669"/>
    <property type="project" value="InterPro"/>
</dbReference>
<dbReference type="GO" id="GO:0006412">
    <property type="term" value="P:translation"/>
    <property type="evidence" value="ECO:0007669"/>
    <property type="project" value="UniProtKB-UniRule"/>
</dbReference>
<dbReference type="CDD" id="cd00495">
    <property type="entry name" value="Ribosomal_L25_TL5_CTC"/>
    <property type="match status" value="1"/>
</dbReference>
<dbReference type="Gene3D" id="2.170.120.20">
    <property type="entry name" value="Ribosomal protein L25, beta domain"/>
    <property type="match status" value="1"/>
</dbReference>
<dbReference type="Gene3D" id="2.40.240.10">
    <property type="entry name" value="Ribosomal Protein L25, Chain P"/>
    <property type="match status" value="1"/>
</dbReference>
<dbReference type="HAMAP" id="MF_01334">
    <property type="entry name" value="Ribosomal_bL25_CTC"/>
    <property type="match status" value="1"/>
</dbReference>
<dbReference type="InterPro" id="IPR020056">
    <property type="entry name" value="Rbsml_bL25/Gln-tRNA_synth_N"/>
</dbReference>
<dbReference type="InterPro" id="IPR011035">
    <property type="entry name" value="Ribosomal_bL25/Gln-tRNA_synth"/>
</dbReference>
<dbReference type="InterPro" id="IPR020057">
    <property type="entry name" value="Ribosomal_bL25_b-dom"/>
</dbReference>
<dbReference type="InterPro" id="IPR037121">
    <property type="entry name" value="Ribosomal_bL25_C"/>
</dbReference>
<dbReference type="InterPro" id="IPR001021">
    <property type="entry name" value="Ribosomal_bL25_long"/>
</dbReference>
<dbReference type="InterPro" id="IPR029751">
    <property type="entry name" value="Ribosomal_L25_dom"/>
</dbReference>
<dbReference type="InterPro" id="IPR020930">
    <property type="entry name" value="Ribosomal_uL5_bac-type"/>
</dbReference>
<dbReference type="NCBIfam" id="TIGR00731">
    <property type="entry name" value="bL25_bact_ctc"/>
    <property type="match status" value="1"/>
</dbReference>
<dbReference type="NCBIfam" id="NF004141">
    <property type="entry name" value="PRK05618.4-4"/>
    <property type="match status" value="1"/>
</dbReference>
<dbReference type="PANTHER" id="PTHR33284">
    <property type="entry name" value="RIBOSOMAL PROTEIN L25/GLN-TRNA SYNTHETASE, ANTI-CODON-BINDING DOMAIN-CONTAINING PROTEIN"/>
    <property type="match status" value="1"/>
</dbReference>
<dbReference type="PANTHER" id="PTHR33284:SF1">
    <property type="entry name" value="RIBOSOMAL PROTEIN L25_GLN-TRNA SYNTHETASE, ANTI-CODON-BINDING DOMAIN-CONTAINING PROTEIN"/>
    <property type="match status" value="1"/>
</dbReference>
<dbReference type="Pfam" id="PF01386">
    <property type="entry name" value="Ribosomal_L25p"/>
    <property type="match status" value="1"/>
</dbReference>
<dbReference type="Pfam" id="PF14693">
    <property type="entry name" value="Ribosomal_TL5_C"/>
    <property type="match status" value="1"/>
</dbReference>
<dbReference type="SUPFAM" id="SSF50715">
    <property type="entry name" value="Ribosomal protein L25-like"/>
    <property type="match status" value="1"/>
</dbReference>
<proteinExistence type="inferred from homology"/>
<evidence type="ECO:0000255" key="1">
    <source>
        <dbReference type="HAMAP-Rule" id="MF_01334"/>
    </source>
</evidence>
<evidence type="ECO:0000256" key="2">
    <source>
        <dbReference type="SAM" id="MobiDB-lite"/>
    </source>
</evidence>
<evidence type="ECO:0000305" key="3"/>
<protein>
    <recommendedName>
        <fullName evidence="1">Large ribosomal subunit protein bL25</fullName>
    </recommendedName>
    <alternativeName>
        <fullName evidence="3">50S ribosomal protein L25</fullName>
    </alternativeName>
    <alternativeName>
        <fullName evidence="1">General stress protein CTC</fullName>
    </alternativeName>
</protein>
<sequence>MQSVSIEAIKRDTGKNAARRLKNQGYIPAILYGKGMAESIPLAVEYNKLQRLLQKHGRNVLLNVIVDGSTHNAVIKEIQEDTLKGKIIHVDFQRVSMYEEIEATVPLKFEGTGLIESRGGIVQHQLWELTVESLPDKIPQEIVVDLSNLEIGDTLFVKDIQVPEGVKVVDDPDEIVVSVLAPRESEEEAEEEATETAKESE</sequence>
<gene>
    <name evidence="1" type="primary">rplY</name>
    <name evidence="1" type="synonym">ctc</name>
    <name type="ordered locus">Teth514_1041</name>
</gene>
<organism>
    <name type="scientific">Thermoanaerobacter sp. (strain X514)</name>
    <dbReference type="NCBI Taxonomy" id="399726"/>
    <lineage>
        <taxon>Bacteria</taxon>
        <taxon>Bacillati</taxon>
        <taxon>Bacillota</taxon>
        <taxon>Clostridia</taxon>
        <taxon>Thermoanaerobacterales</taxon>
        <taxon>Thermoanaerobacteraceae</taxon>
        <taxon>Thermoanaerobacter</taxon>
    </lineage>
</organism>
<accession>B0K664</accession>
<keyword id="KW-0687">Ribonucleoprotein</keyword>
<keyword id="KW-0689">Ribosomal protein</keyword>
<keyword id="KW-0694">RNA-binding</keyword>
<keyword id="KW-0699">rRNA-binding</keyword>
<name>RL25_THEPX</name>